<proteinExistence type="inferred from homology"/>
<gene>
    <name evidence="1" type="primary">ruvC</name>
    <name type="ordered locus">RBE_1178</name>
</gene>
<dbReference type="EC" id="3.1.21.10" evidence="1"/>
<dbReference type="EMBL" id="CP000087">
    <property type="protein sequence ID" value="ABE05259.1"/>
    <property type="molecule type" value="Genomic_DNA"/>
</dbReference>
<dbReference type="RefSeq" id="WP_011477837.1">
    <property type="nucleotide sequence ID" value="NC_007940.1"/>
</dbReference>
<dbReference type="SMR" id="Q1RHA5"/>
<dbReference type="KEGG" id="rbe:RBE_1178"/>
<dbReference type="eggNOG" id="COG0817">
    <property type="taxonomic scope" value="Bacteria"/>
</dbReference>
<dbReference type="HOGENOM" id="CLU_091257_1_0_5"/>
<dbReference type="OrthoDB" id="9805499at2"/>
<dbReference type="Proteomes" id="UP000001951">
    <property type="component" value="Chromosome"/>
</dbReference>
<dbReference type="GO" id="GO:0005737">
    <property type="term" value="C:cytoplasm"/>
    <property type="evidence" value="ECO:0007669"/>
    <property type="project" value="UniProtKB-SubCell"/>
</dbReference>
<dbReference type="GO" id="GO:0048476">
    <property type="term" value="C:Holliday junction resolvase complex"/>
    <property type="evidence" value="ECO:0007669"/>
    <property type="project" value="UniProtKB-UniRule"/>
</dbReference>
<dbReference type="GO" id="GO:0008821">
    <property type="term" value="F:crossover junction DNA endonuclease activity"/>
    <property type="evidence" value="ECO:0007669"/>
    <property type="project" value="UniProtKB-UniRule"/>
</dbReference>
<dbReference type="GO" id="GO:0003677">
    <property type="term" value="F:DNA binding"/>
    <property type="evidence" value="ECO:0007669"/>
    <property type="project" value="UniProtKB-KW"/>
</dbReference>
<dbReference type="GO" id="GO:0000287">
    <property type="term" value="F:magnesium ion binding"/>
    <property type="evidence" value="ECO:0007669"/>
    <property type="project" value="UniProtKB-UniRule"/>
</dbReference>
<dbReference type="GO" id="GO:0006310">
    <property type="term" value="P:DNA recombination"/>
    <property type="evidence" value="ECO:0007669"/>
    <property type="project" value="UniProtKB-UniRule"/>
</dbReference>
<dbReference type="GO" id="GO:0006281">
    <property type="term" value="P:DNA repair"/>
    <property type="evidence" value="ECO:0007669"/>
    <property type="project" value="UniProtKB-UniRule"/>
</dbReference>
<dbReference type="CDD" id="cd16962">
    <property type="entry name" value="RuvC"/>
    <property type="match status" value="1"/>
</dbReference>
<dbReference type="FunFam" id="3.30.420.10:FF:000002">
    <property type="entry name" value="Crossover junction endodeoxyribonuclease RuvC"/>
    <property type="match status" value="1"/>
</dbReference>
<dbReference type="Gene3D" id="3.30.420.10">
    <property type="entry name" value="Ribonuclease H-like superfamily/Ribonuclease H"/>
    <property type="match status" value="1"/>
</dbReference>
<dbReference type="HAMAP" id="MF_00034">
    <property type="entry name" value="RuvC"/>
    <property type="match status" value="1"/>
</dbReference>
<dbReference type="InterPro" id="IPR012337">
    <property type="entry name" value="RNaseH-like_sf"/>
</dbReference>
<dbReference type="InterPro" id="IPR036397">
    <property type="entry name" value="RNaseH_sf"/>
</dbReference>
<dbReference type="InterPro" id="IPR020563">
    <property type="entry name" value="X-over_junc_endoDNase_Mg_BS"/>
</dbReference>
<dbReference type="InterPro" id="IPR002176">
    <property type="entry name" value="X-over_junc_endoDNase_RuvC"/>
</dbReference>
<dbReference type="NCBIfam" id="TIGR00228">
    <property type="entry name" value="ruvC"/>
    <property type="match status" value="1"/>
</dbReference>
<dbReference type="PANTHER" id="PTHR30194">
    <property type="entry name" value="CROSSOVER JUNCTION ENDODEOXYRIBONUCLEASE RUVC"/>
    <property type="match status" value="1"/>
</dbReference>
<dbReference type="PANTHER" id="PTHR30194:SF3">
    <property type="entry name" value="CROSSOVER JUNCTION ENDODEOXYRIBONUCLEASE RUVC"/>
    <property type="match status" value="1"/>
</dbReference>
<dbReference type="Pfam" id="PF02075">
    <property type="entry name" value="RuvC"/>
    <property type="match status" value="1"/>
</dbReference>
<dbReference type="PRINTS" id="PR00696">
    <property type="entry name" value="RSOLVASERUVC"/>
</dbReference>
<dbReference type="SUPFAM" id="SSF53098">
    <property type="entry name" value="Ribonuclease H-like"/>
    <property type="match status" value="1"/>
</dbReference>
<dbReference type="PROSITE" id="PS01321">
    <property type="entry name" value="RUVC"/>
    <property type="match status" value="1"/>
</dbReference>
<protein>
    <recommendedName>
        <fullName evidence="1">Crossover junction endodeoxyribonuclease RuvC</fullName>
        <ecNumber evidence="1">3.1.21.10</ecNumber>
    </recommendedName>
    <alternativeName>
        <fullName evidence="1">Holliday junction nuclease RuvC</fullName>
    </alternativeName>
    <alternativeName>
        <fullName evidence="1">Holliday junction resolvase RuvC</fullName>
    </alternativeName>
</protein>
<comment type="function">
    <text evidence="1">The RuvA-RuvB-RuvC complex processes Holliday junction (HJ) DNA during genetic recombination and DNA repair. Endonuclease that resolves HJ intermediates. Cleaves cruciform DNA by making single-stranded nicks across the HJ at symmetrical positions within the homologous arms, yielding a 5'-phosphate and a 3'-hydroxyl group; requires a central core of homology in the junction. The consensus cleavage sequence is 5'-(A/T)TT(C/G)-3'. Cleavage occurs on the 3'-side of the TT dinucleotide at the point of strand exchange. HJ branch migration catalyzed by RuvA-RuvB allows RuvC to scan DNA until it finds its consensus sequence, where it cleaves and resolves the cruciform DNA.</text>
</comment>
<comment type="catalytic activity">
    <reaction evidence="1">
        <text>Endonucleolytic cleavage at a junction such as a reciprocal single-stranded crossover between two homologous DNA duplexes (Holliday junction).</text>
        <dbReference type="EC" id="3.1.21.10"/>
    </reaction>
</comment>
<comment type="cofactor">
    <cofactor evidence="1">
        <name>Mg(2+)</name>
        <dbReference type="ChEBI" id="CHEBI:18420"/>
    </cofactor>
    <text evidence="1">Binds 2 Mg(2+) ion per subunit.</text>
</comment>
<comment type="subunit">
    <text evidence="1">Homodimer which binds Holliday junction (HJ) DNA. The HJ becomes 2-fold symmetrical on binding to RuvC with unstacked arms; it has a different conformation from HJ DNA in complex with RuvA. In the full resolvosome a probable DNA-RuvA(4)-RuvB(12)-RuvC(2) complex forms which resolves the HJ.</text>
</comment>
<comment type="subcellular location">
    <subcellularLocation>
        <location evidence="1">Cytoplasm</location>
    </subcellularLocation>
</comment>
<comment type="similarity">
    <text evidence="1">Belongs to the RuvC family.</text>
</comment>
<sequence>MIVLGIDPALGSLGWAVVAKESAKLKYLASGVIKTSSKDEIHHRLSYINSILEKVILEYKPNMAAIEETFVNTNSVTSLKLGYARGAIMSLIGRYDLDMREFKPNTIKKTVTGYGHAEKDQILHMIKLLLPGTAAITNSDEADAVAIAYTCLVTKNY</sequence>
<organism>
    <name type="scientific">Rickettsia bellii (strain RML369-C)</name>
    <dbReference type="NCBI Taxonomy" id="336407"/>
    <lineage>
        <taxon>Bacteria</taxon>
        <taxon>Pseudomonadati</taxon>
        <taxon>Pseudomonadota</taxon>
        <taxon>Alphaproteobacteria</taxon>
        <taxon>Rickettsiales</taxon>
        <taxon>Rickettsiaceae</taxon>
        <taxon>Rickettsieae</taxon>
        <taxon>Rickettsia</taxon>
        <taxon>belli group</taxon>
    </lineage>
</organism>
<keyword id="KW-0963">Cytoplasm</keyword>
<keyword id="KW-0227">DNA damage</keyword>
<keyword id="KW-0233">DNA recombination</keyword>
<keyword id="KW-0234">DNA repair</keyword>
<keyword id="KW-0238">DNA-binding</keyword>
<keyword id="KW-0255">Endonuclease</keyword>
<keyword id="KW-0378">Hydrolase</keyword>
<keyword id="KW-0460">Magnesium</keyword>
<keyword id="KW-0479">Metal-binding</keyword>
<keyword id="KW-0540">Nuclease</keyword>
<reference key="1">
    <citation type="journal article" date="2006" name="PLoS Genet.">
        <title>Genome sequence of Rickettsia bellii illuminates the role of amoebae in gene exchanges between intracellular pathogens.</title>
        <authorList>
            <person name="Ogata H."/>
            <person name="La Scola B."/>
            <person name="Audic S."/>
            <person name="Renesto P."/>
            <person name="Blanc G."/>
            <person name="Robert C."/>
            <person name="Fournier P.-E."/>
            <person name="Claverie J.-M."/>
            <person name="Raoult D."/>
        </authorList>
    </citation>
    <scope>NUCLEOTIDE SEQUENCE [LARGE SCALE GENOMIC DNA]</scope>
    <source>
        <strain>RML369-C</strain>
    </source>
</reference>
<feature type="chain" id="PRO_0000278069" description="Crossover junction endodeoxyribonuclease RuvC">
    <location>
        <begin position="1"/>
        <end position="157"/>
    </location>
</feature>
<feature type="active site" evidence="1">
    <location>
        <position position="7"/>
    </location>
</feature>
<feature type="active site" evidence="1">
    <location>
        <position position="67"/>
    </location>
</feature>
<feature type="active site" evidence="1">
    <location>
        <position position="140"/>
    </location>
</feature>
<feature type="binding site" evidence="1">
    <location>
        <position position="7"/>
    </location>
    <ligand>
        <name>Mg(2+)</name>
        <dbReference type="ChEBI" id="CHEBI:18420"/>
        <label>1</label>
    </ligand>
</feature>
<feature type="binding site" evidence="1">
    <location>
        <position position="67"/>
    </location>
    <ligand>
        <name>Mg(2+)</name>
        <dbReference type="ChEBI" id="CHEBI:18420"/>
        <label>2</label>
    </ligand>
</feature>
<feature type="binding site" evidence="1">
    <location>
        <position position="140"/>
    </location>
    <ligand>
        <name>Mg(2+)</name>
        <dbReference type="ChEBI" id="CHEBI:18420"/>
        <label>1</label>
    </ligand>
</feature>
<evidence type="ECO:0000255" key="1">
    <source>
        <dbReference type="HAMAP-Rule" id="MF_00034"/>
    </source>
</evidence>
<name>RUVC_RICBR</name>
<accession>Q1RHA5</accession>